<dbReference type="EC" id="1.1.1.-" evidence="4"/>
<dbReference type="EMBL" id="CM004458">
    <property type="protein sequence ID" value="OBR09785.1"/>
    <property type="molecule type" value="Genomic_DNA"/>
</dbReference>
<dbReference type="EMBL" id="CACQ02004858">
    <property type="status" value="NOT_ANNOTATED_CDS"/>
    <property type="molecule type" value="Genomic_DNA"/>
</dbReference>
<dbReference type="RefSeq" id="XP_018158302.1">
    <property type="nucleotide sequence ID" value="XM_018300452.1"/>
</dbReference>
<dbReference type="SMR" id="H1VN83"/>
<dbReference type="STRING" id="759273.H1VN83"/>
<dbReference type="EnsemblFungi" id="CCF41687">
    <property type="protein sequence ID" value="CCF41687"/>
    <property type="gene ID" value="CH063_11894"/>
</dbReference>
<dbReference type="GeneID" id="28864559"/>
<dbReference type="KEGG" id="chig:CH63R_05477"/>
<dbReference type="VEuPathDB" id="FungiDB:CH63R_05477"/>
<dbReference type="eggNOG" id="KOG0725">
    <property type="taxonomic scope" value="Eukaryota"/>
</dbReference>
<dbReference type="HOGENOM" id="CLU_010194_1_0_1"/>
<dbReference type="OrthoDB" id="47894at1028384"/>
<dbReference type="UniPathway" id="UPA00213"/>
<dbReference type="Proteomes" id="UP000007174">
    <property type="component" value="Unassembled WGS sequence"/>
</dbReference>
<dbReference type="Proteomes" id="UP000092177">
    <property type="component" value="Chromosome 4"/>
</dbReference>
<dbReference type="GO" id="GO:0016491">
    <property type="term" value="F:oxidoreductase activity"/>
    <property type="evidence" value="ECO:0007669"/>
    <property type="project" value="UniProtKB-KW"/>
</dbReference>
<dbReference type="GO" id="GO:0016114">
    <property type="term" value="P:terpenoid biosynthetic process"/>
    <property type="evidence" value="ECO:0007669"/>
    <property type="project" value="UniProtKB-UniPathway"/>
</dbReference>
<dbReference type="CDD" id="cd05233">
    <property type="entry name" value="SDR_c"/>
    <property type="match status" value="1"/>
</dbReference>
<dbReference type="FunFam" id="3.40.50.720:FF:000084">
    <property type="entry name" value="Short-chain dehydrogenase reductase"/>
    <property type="match status" value="1"/>
</dbReference>
<dbReference type="Gene3D" id="3.40.50.720">
    <property type="entry name" value="NAD(P)-binding Rossmann-like Domain"/>
    <property type="match status" value="1"/>
</dbReference>
<dbReference type="InterPro" id="IPR036291">
    <property type="entry name" value="NAD(P)-bd_dom_sf"/>
</dbReference>
<dbReference type="InterPro" id="IPR020904">
    <property type="entry name" value="Sc_DH/Rdtase_CS"/>
</dbReference>
<dbReference type="InterPro" id="IPR002347">
    <property type="entry name" value="SDR_fam"/>
</dbReference>
<dbReference type="PANTHER" id="PTHR24321">
    <property type="entry name" value="DEHYDROGENASES, SHORT CHAIN"/>
    <property type="match status" value="1"/>
</dbReference>
<dbReference type="PANTHER" id="PTHR24321:SF8">
    <property type="entry name" value="ESTRADIOL 17-BETA-DEHYDROGENASE 8-RELATED"/>
    <property type="match status" value="1"/>
</dbReference>
<dbReference type="Pfam" id="PF00106">
    <property type="entry name" value="adh_short"/>
    <property type="match status" value="1"/>
</dbReference>
<dbReference type="PRINTS" id="PR00081">
    <property type="entry name" value="GDHRDH"/>
</dbReference>
<dbReference type="PRINTS" id="PR00080">
    <property type="entry name" value="SDRFAMILY"/>
</dbReference>
<dbReference type="SUPFAM" id="SSF51735">
    <property type="entry name" value="NAD(P)-binding Rossmann-fold domains"/>
    <property type="match status" value="1"/>
</dbReference>
<dbReference type="PROSITE" id="PS00061">
    <property type="entry name" value="ADH_SHORT"/>
    <property type="match status" value="1"/>
</dbReference>
<comment type="function">
    <text evidence="4 7">Short chain dehydrogenase/reductase; part of the gene cluster that mediates the biosynthesis of the diterpenoid pyrones higginsianins A and B (PubMed:32286350). The first step of the pathway is the synthesis of the alpha-pyrone moiety by the polyketide synthase dpchA via condensation of one acetyl-CoA starter unit with 3 malonyl-CoA units and 2 methylations (Probable). The alpha-pyrone is then combined with geranylgeranyl pyrophosphate (GGPP) formed by the GGPP synthase dpchD through the action of the prenyltransferase dpchC to yield a linear alpha-pyrone diterpenoid (Probable). Subsequent steps in the diterpenoid pyrone biosynthetic pathway involve the decalin core formation, which is initiated by the epoxidation of the C10-C11 olefin by the FAD-dependent oxidoreductase dpchE, and is followed by a cyclization cascade catalyzed by the terpene cyclase dpchB (Probable). The short chain dehydrogenase/reductase dpchG then oxidizes the 8S hydroxy group to a ketone and the short chain dehydrogenase/reductase dpchH reduces the ketone to the 8R hydroxy group to yield higginsianin B (PubMed:32286350). Finally, the FAD-dependent oxidoreductase dpchF converts higginsianin B into higginsianin A (PubMed:32286350).</text>
</comment>
<comment type="pathway">
    <text evidence="4">Secondary metabolite biosynthesis; terpenoid biosynthesis.</text>
</comment>
<comment type="biotechnology">
    <text evidence="4">Diterpenoid pyrones display various biological activities and higginsianin A shows anti-HIV activity.</text>
</comment>
<comment type="similarity">
    <text evidence="6">Belongs to the short-chain dehydrogenases/reductases (SDR) family.</text>
</comment>
<sequence length="268" mass="27687">MTSSEKNSTGLAGKTCLVTGGAGGLGKAVTAAFLDAGANVVICDINAKRIESTLAELRTRGGNLTAVTADITDHDQVLSLFDDIAGRFGTLDVLVNNAAVMDRFDPVGDIELDLWDNVLAVNLTAPLQLSKFAVRSMLSKPEPAGCIINIASGAATAGWLAGTAYTASKHGLVGLTKSTAAFYGPKGIRCNALIMGVMVGTHMHEAFLDGCHKEGRQKVEEIFSGHRPQTCKVDDVAGICLSLASGPGWGTVNGALIAVDNGWTSVVG</sequence>
<accession>H1VN83</accession>
<keyword id="KW-0521">NADP</keyword>
<keyword id="KW-0560">Oxidoreductase</keyword>
<keyword id="KW-1185">Reference proteome</keyword>
<proteinExistence type="evidence at protein level"/>
<organism>
    <name type="scientific">Colletotrichum higginsianum (strain IMI 349063)</name>
    <name type="common">Crucifer anthracnose fungus</name>
    <dbReference type="NCBI Taxonomy" id="759273"/>
    <lineage>
        <taxon>Eukaryota</taxon>
        <taxon>Fungi</taxon>
        <taxon>Dikarya</taxon>
        <taxon>Ascomycota</taxon>
        <taxon>Pezizomycotina</taxon>
        <taxon>Sordariomycetes</taxon>
        <taxon>Hypocreomycetidae</taxon>
        <taxon>Glomerellales</taxon>
        <taxon>Glomerellaceae</taxon>
        <taxon>Colletotrichum</taxon>
        <taxon>Colletotrichum destructivum species complex</taxon>
    </lineage>
</organism>
<protein>
    <recommendedName>
        <fullName evidence="5">Short chain dehydrogenase/reductase dpchG</fullName>
        <ecNumber evidence="4">1.1.1.-</ecNumber>
    </recommendedName>
    <alternativeName>
        <fullName evidence="5">Diterpenoid pyrone biosynthesis cluster protein G</fullName>
    </alternativeName>
</protein>
<reference key="1">
    <citation type="journal article" date="2012" name="Nat. Genet.">
        <title>Lifestyle transitions in plant pathogenic Colletotrichum fungi deciphered by genome and transcriptome analyses.</title>
        <authorList>
            <person name="O'Connell R.J."/>
            <person name="Thon M.R."/>
            <person name="Hacquard S."/>
            <person name="Amyotte S.G."/>
            <person name="Kleemann J."/>
            <person name="Torres M.F."/>
            <person name="Damm U."/>
            <person name="Buiate E.A."/>
            <person name="Epstein L."/>
            <person name="Alkan N."/>
            <person name="Altmueller J."/>
            <person name="Alvarado-Balderrama L."/>
            <person name="Bauser C.A."/>
            <person name="Becker C."/>
            <person name="Birren B.W."/>
            <person name="Chen Z."/>
            <person name="Choi J."/>
            <person name="Crouch J.A."/>
            <person name="Duvick J.P."/>
            <person name="Farman M.A."/>
            <person name="Gan P."/>
            <person name="Heiman D."/>
            <person name="Henrissat B."/>
            <person name="Howard R.J."/>
            <person name="Kabbage M."/>
            <person name="Koch C."/>
            <person name="Kracher B."/>
            <person name="Kubo Y."/>
            <person name="Law A.D."/>
            <person name="Lebrun M.-H."/>
            <person name="Lee Y.-H."/>
            <person name="Miyara I."/>
            <person name="Moore N."/>
            <person name="Neumann U."/>
            <person name="Nordstroem K."/>
            <person name="Panaccione D.G."/>
            <person name="Panstruga R."/>
            <person name="Place M."/>
            <person name="Proctor R.H."/>
            <person name="Prusky D."/>
            <person name="Rech G."/>
            <person name="Reinhardt R."/>
            <person name="Rollins J.A."/>
            <person name="Rounsley S."/>
            <person name="Schardl C.L."/>
            <person name="Schwartz D.C."/>
            <person name="Shenoy N."/>
            <person name="Shirasu K."/>
            <person name="Sikhakolli U.R."/>
            <person name="Stueber K."/>
            <person name="Sukno S.A."/>
            <person name="Sweigard J.A."/>
            <person name="Takano Y."/>
            <person name="Takahara H."/>
            <person name="Trail F."/>
            <person name="van der Does H.C."/>
            <person name="Voll L.M."/>
            <person name="Will I."/>
            <person name="Young S."/>
            <person name="Zeng Q."/>
            <person name="Zhang J."/>
            <person name="Zhou S."/>
            <person name="Dickman M.B."/>
            <person name="Schulze-Lefert P."/>
            <person name="Ver Loren van Themaat E."/>
            <person name="Ma L.-J."/>
            <person name="Vaillancourt L.J."/>
        </authorList>
    </citation>
    <scope>NUCLEOTIDE SEQUENCE [LARGE SCALE GENOMIC DNA]</scope>
    <source>
        <strain>IMI 349063</strain>
    </source>
</reference>
<reference key="2">
    <citation type="journal article" date="2017" name="BMC Genomics">
        <title>Gapless genome assembly of Colletotrichum higginsianum reveals chromosome structure and association of transposable elements with secondary metabolite gene clusters.</title>
        <authorList>
            <person name="Dallery J.-F."/>
            <person name="Lapalu N."/>
            <person name="Zampounis A."/>
            <person name="Pigne S."/>
            <person name="Luyten I."/>
            <person name="Amselem J."/>
            <person name="Wittenberg A.H.J."/>
            <person name="Zhou S."/>
            <person name="de Queiroz M.V."/>
            <person name="Robin G.P."/>
            <person name="Auger A."/>
            <person name="Hainaut M."/>
            <person name="Henrissat B."/>
            <person name="Kim K.-T."/>
            <person name="Lee Y.-H."/>
            <person name="Lespinet O."/>
            <person name="Schwartz D.C."/>
            <person name="Thon M.R."/>
            <person name="O'Connell R.J."/>
        </authorList>
    </citation>
    <scope>NUCLEOTIDE SEQUENCE [LARGE SCALE GENOMIC DNA]</scope>
    <scope>GENOME REANNOTATION</scope>
    <source>
        <strain>IMI 349063</strain>
    </source>
</reference>
<reference key="3">
    <citation type="journal article" date="2020" name="Nat. Commun.">
        <title>Synthetic biology based construction of biological activity-related library of fungal decalin-containing diterpenoid pyrones.</title>
        <authorList>
            <person name="Tsukada K."/>
            <person name="Shinki S."/>
            <person name="Kaneko A."/>
            <person name="Murakami K."/>
            <person name="Irie K."/>
            <person name="Murai M."/>
            <person name="Miyoshi H."/>
            <person name="Dan S."/>
            <person name="Kawaji K."/>
            <person name="Hayashi H."/>
            <person name="Kodama E.N."/>
            <person name="Hori A."/>
            <person name="Salim E."/>
            <person name="Kuraishi T."/>
            <person name="Hirata N."/>
            <person name="Kanda Y."/>
            <person name="Asai T."/>
        </authorList>
    </citation>
    <scope>FUNCTION</scope>
    <scope>CATALYTIC ACTIVITY</scope>
    <scope>PATHWAY</scope>
    <scope>BIOTECHNOLOGY</scope>
</reference>
<gene>
    <name evidence="5" type="primary">dpchG</name>
    <name type="ORF">CH063_11894</name>
    <name type="ORF">CH63R_05477</name>
</gene>
<evidence type="ECO:0000250" key="1">
    <source>
        <dbReference type="UniProtKB" id="L0E2Z4"/>
    </source>
</evidence>
<evidence type="ECO:0000250" key="2">
    <source>
        <dbReference type="UniProtKB" id="O93868"/>
    </source>
</evidence>
<evidence type="ECO:0000255" key="3">
    <source>
        <dbReference type="PROSITE-ProRule" id="PRU10001"/>
    </source>
</evidence>
<evidence type="ECO:0000269" key="4">
    <source>
    </source>
</evidence>
<evidence type="ECO:0000303" key="5">
    <source>
    </source>
</evidence>
<evidence type="ECO:0000305" key="6"/>
<evidence type="ECO:0000305" key="7">
    <source>
    </source>
</evidence>
<feature type="chain" id="PRO_0000451549" description="Short chain dehydrogenase/reductase dpchG">
    <location>
        <begin position="1"/>
        <end position="268"/>
    </location>
</feature>
<feature type="active site" description="Proton acceptor" evidence="3">
    <location>
        <position position="165"/>
    </location>
</feature>
<feature type="active site" description="Lowers pKa of active site Tyr" evidence="2">
    <location>
        <position position="169"/>
    </location>
</feature>
<feature type="binding site" evidence="1">
    <location>
        <position position="18"/>
    </location>
    <ligand>
        <name>NADP(+)</name>
        <dbReference type="ChEBI" id="CHEBI:58349"/>
    </ligand>
</feature>
<feature type="binding site" evidence="1">
    <location>
        <position position="70"/>
    </location>
    <ligand>
        <name>NADP(+)</name>
        <dbReference type="ChEBI" id="CHEBI:58349"/>
    </ligand>
</feature>
<feature type="binding site" evidence="2">
    <location>
        <position position="97"/>
    </location>
    <ligand>
        <name>NADP(+)</name>
        <dbReference type="ChEBI" id="CHEBI:58349"/>
    </ligand>
</feature>
<feature type="binding site" evidence="1">
    <location>
        <position position="131"/>
    </location>
    <ligand>
        <name>NADP(+)</name>
        <dbReference type="ChEBI" id="CHEBI:58349"/>
    </ligand>
</feature>
<feature type="binding site" evidence="2">
    <location>
        <position position="165"/>
    </location>
    <ligand>
        <name>NADP(+)</name>
        <dbReference type="ChEBI" id="CHEBI:58349"/>
    </ligand>
</feature>
<feature type="binding site" evidence="2">
    <location>
        <position position="169"/>
    </location>
    <ligand>
        <name>NADP(+)</name>
        <dbReference type="ChEBI" id="CHEBI:58349"/>
    </ligand>
</feature>
<name>DPCHG_COLHI</name>